<gene>
    <name evidence="1" type="primary">rpsH</name>
    <name type="ordered locus">mma_3397</name>
</gene>
<accession>A6T3J0</accession>
<sequence>MSMSDPIADMLTRIRNAQVVQKTSVAMPSSKVKIAIANVLKDEGYIEDFAVTEAAGKAELKIGLKYYAGRPVIERLERVSRPGLRIYKGKDDIPNVMNGLGVAIVSTPKGVMTDRKARATGVGGEVICYVA</sequence>
<protein>
    <recommendedName>
        <fullName evidence="1">Small ribosomal subunit protein uS8</fullName>
    </recommendedName>
    <alternativeName>
        <fullName evidence="2">30S ribosomal protein S8</fullName>
    </alternativeName>
</protein>
<comment type="function">
    <text evidence="1">One of the primary rRNA binding proteins, it binds directly to 16S rRNA central domain where it helps coordinate assembly of the platform of the 30S subunit.</text>
</comment>
<comment type="subunit">
    <text evidence="1">Part of the 30S ribosomal subunit. Contacts proteins S5 and S12.</text>
</comment>
<comment type="similarity">
    <text evidence="1">Belongs to the universal ribosomal protein uS8 family.</text>
</comment>
<name>RS8_JANMA</name>
<proteinExistence type="inferred from homology"/>
<feature type="chain" id="PRO_0000305748" description="Small ribosomal subunit protein uS8">
    <location>
        <begin position="1"/>
        <end position="131"/>
    </location>
</feature>
<keyword id="KW-0687">Ribonucleoprotein</keyword>
<keyword id="KW-0689">Ribosomal protein</keyword>
<keyword id="KW-0694">RNA-binding</keyword>
<keyword id="KW-0699">rRNA-binding</keyword>
<evidence type="ECO:0000255" key="1">
    <source>
        <dbReference type="HAMAP-Rule" id="MF_01302"/>
    </source>
</evidence>
<evidence type="ECO:0000305" key="2"/>
<organism>
    <name type="scientific">Janthinobacterium sp. (strain Marseille)</name>
    <name type="common">Minibacterium massiliensis</name>
    <dbReference type="NCBI Taxonomy" id="375286"/>
    <lineage>
        <taxon>Bacteria</taxon>
        <taxon>Pseudomonadati</taxon>
        <taxon>Pseudomonadota</taxon>
        <taxon>Betaproteobacteria</taxon>
        <taxon>Burkholderiales</taxon>
        <taxon>Oxalobacteraceae</taxon>
        <taxon>Janthinobacterium</taxon>
    </lineage>
</organism>
<reference key="1">
    <citation type="journal article" date="2007" name="PLoS Genet.">
        <title>Genome analysis of Minibacterium massiliensis highlights the convergent evolution of water-living bacteria.</title>
        <authorList>
            <person name="Audic S."/>
            <person name="Robert C."/>
            <person name="Campagna B."/>
            <person name="Parinello H."/>
            <person name="Claverie J.-M."/>
            <person name="Raoult D."/>
            <person name="Drancourt M."/>
        </authorList>
    </citation>
    <scope>NUCLEOTIDE SEQUENCE [LARGE SCALE GENOMIC DNA]</scope>
    <source>
        <strain>Marseille</strain>
    </source>
</reference>
<dbReference type="EMBL" id="CP000269">
    <property type="protein sequence ID" value="ABR89087.1"/>
    <property type="molecule type" value="Genomic_DNA"/>
</dbReference>
<dbReference type="RefSeq" id="WP_012081237.1">
    <property type="nucleotide sequence ID" value="NC_009659.1"/>
</dbReference>
<dbReference type="SMR" id="A6T3J0"/>
<dbReference type="STRING" id="375286.mma_3397"/>
<dbReference type="KEGG" id="mms:mma_3397"/>
<dbReference type="eggNOG" id="COG0096">
    <property type="taxonomic scope" value="Bacteria"/>
</dbReference>
<dbReference type="HOGENOM" id="CLU_098428_0_0_4"/>
<dbReference type="OrthoDB" id="9802617at2"/>
<dbReference type="Proteomes" id="UP000006388">
    <property type="component" value="Chromosome"/>
</dbReference>
<dbReference type="GO" id="GO:1990904">
    <property type="term" value="C:ribonucleoprotein complex"/>
    <property type="evidence" value="ECO:0007669"/>
    <property type="project" value="UniProtKB-KW"/>
</dbReference>
<dbReference type="GO" id="GO:0005840">
    <property type="term" value="C:ribosome"/>
    <property type="evidence" value="ECO:0007669"/>
    <property type="project" value="UniProtKB-KW"/>
</dbReference>
<dbReference type="GO" id="GO:0019843">
    <property type="term" value="F:rRNA binding"/>
    <property type="evidence" value="ECO:0007669"/>
    <property type="project" value="UniProtKB-UniRule"/>
</dbReference>
<dbReference type="GO" id="GO:0003735">
    <property type="term" value="F:structural constituent of ribosome"/>
    <property type="evidence" value="ECO:0007669"/>
    <property type="project" value="InterPro"/>
</dbReference>
<dbReference type="GO" id="GO:0006412">
    <property type="term" value="P:translation"/>
    <property type="evidence" value="ECO:0007669"/>
    <property type="project" value="UniProtKB-UniRule"/>
</dbReference>
<dbReference type="FunFam" id="3.30.1370.30:FF:000002">
    <property type="entry name" value="30S ribosomal protein S8"/>
    <property type="match status" value="1"/>
</dbReference>
<dbReference type="FunFam" id="3.30.1490.10:FF:000001">
    <property type="entry name" value="30S ribosomal protein S8"/>
    <property type="match status" value="1"/>
</dbReference>
<dbReference type="Gene3D" id="3.30.1370.30">
    <property type="match status" value="1"/>
</dbReference>
<dbReference type="Gene3D" id="3.30.1490.10">
    <property type="match status" value="1"/>
</dbReference>
<dbReference type="HAMAP" id="MF_01302_B">
    <property type="entry name" value="Ribosomal_uS8_B"/>
    <property type="match status" value="1"/>
</dbReference>
<dbReference type="InterPro" id="IPR000630">
    <property type="entry name" value="Ribosomal_uS8"/>
</dbReference>
<dbReference type="InterPro" id="IPR047863">
    <property type="entry name" value="Ribosomal_uS8_CS"/>
</dbReference>
<dbReference type="InterPro" id="IPR035987">
    <property type="entry name" value="Ribosomal_uS8_sf"/>
</dbReference>
<dbReference type="NCBIfam" id="NF001109">
    <property type="entry name" value="PRK00136.1"/>
    <property type="match status" value="1"/>
</dbReference>
<dbReference type="PANTHER" id="PTHR11758">
    <property type="entry name" value="40S RIBOSOMAL PROTEIN S15A"/>
    <property type="match status" value="1"/>
</dbReference>
<dbReference type="Pfam" id="PF00410">
    <property type="entry name" value="Ribosomal_S8"/>
    <property type="match status" value="1"/>
</dbReference>
<dbReference type="SUPFAM" id="SSF56047">
    <property type="entry name" value="Ribosomal protein S8"/>
    <property type="match status" value="1"/>
</dbReference>
<dbReference type="PROSITE" id="PS00053">
    <property type="entry name" value="RIBOSOMAL_S8"/>
    <property type="match status" value="1"/>
</dbReference>